<accession>B0ST02</accession>
<keyword id="KW-1185">Reference proteome</keyword>
<keyword id="KW-0686">Riboflavin biosynthesis</keyword>
<keyword id="KW-0808">Transferase</keyword>
<sequence>MTAQLEGLRIGNGQKHCVIVSKFNEFITESLLKGAKDAYRQHGVAESDVTVIYVPGAFELPQTVKRVLGSKKYQFSAIVCLGAVIRGATSHYDLVSGEAAKVGSVADGSVPVIFGVITTESIEQAIERAGTKAGNKGYEAATTAIEMANLFKEIG</sequence>
<reference key="1">
    <citation type="journal article" date="2008" name="PLoS ONE">
        <title>Genome sequence of the saprophyte Leptospira biflexa provides insights into the evolution of Leptospira and the pathogenesis of leptospirosis.</title>
        <authorList>
            <person name="Picardeau M."/>
            <person name="Bulach D.M."/>
            <person name="Bouchier C."/>
            <person name="Zuerner R.L."/>
            <person name="Zidane N."/>
            <person name="Wilson P.J."/>
            <person name="Creno S."/>
            <person name="Kuczek E.S."/>
            <person name="Bommezzadri S."/>
            <person name="Davis J.C."/>
            <person name="McGrath A."/>
            <person name="Johnson M.J."/>
            <person name="Boursaux-Eude C."/>
            <person name="Seemann T."/>
            <person name="Rouy Z."/>
            <person name="Coppel R.L."/>
            <person name="Rood J.I."/>
            <person name="Lajus A."/>
            <person name="Davies J.K."/>
            <person name="Medigue C."/>
            <person name="Adler B."/>
        </authorList>
    </citation>
    <scope>NUCLEOTIDE SEQUENCE [LARGE SCALE GENOMIC DNA]</scope>
    <source>
        <strain>Patoc 1 / ATCC 23582 / Paris</strain>
    </source>
</reference>
<gene>
    <name evidence="1" type="primary">ribH</name>
    <name type="ordered locus">LEPBI_I2140</name>
</gene>
<proteinExistence type="inferred from homology"/>
<evidence type="ECO:0000255" key="1">
    <source>
        <dbReference type="HAMAP-Rule" id="MF_00178"/>
    </source>
</evidence>
<organism>
    <name type="scientific">Leptospira biflexa serovar Patoc (strain Patoc 1 / ATCC 23582 / Paris)</name>
    <dbReference type="NCBI Taxonomy" id="456481"/>
    <lineage>
        <taxon>Bacteria</taxon>
        <taxon>Pseudomonadati</taxon>
        <taxon>Spirochaetota</taxon>
        <taxon>Spirochaetia</taxon>
        <taxon>Leptospirales</taxon>
        <taxon>Leptospiraceae</taxon>
        <taxon>Leptospira</taxon>
    </lineage>
</organism>
<feature type="chain" id="PRO_1000098204" description="6,7-dimethyl-8-ribityllumazine synthase">
    <location>
        <begin position="1"/>
        <end position="155"/>
    </location>
</feature>
<feature type="active site" description="Proton donor" evidence="1">
    <location>
        <position position="91"/>
    </location>
</feature>
<feature type="binding site" evidence="1">
    <location>
        <position position="23"/>
    </location>
    <ligand>
        <name>5-amino-6-(D-ribitylamino)uracil</name>
        <dbReference type="ChEBI" id="CHEBI:15934"/>
    </ligand>
</feature>
<feature type="binding site" evidence="1">
    <location>
        <begin position="57"/>
        <end position="59"/>
    </location>
    <ligand>
        <name>5-amino-6-(D-ribitylamino)uracil</name>
        <dbReference type="ChEBI" id="CHEBI:15934"/>
    </ligand>
</feature>
<feature type="binding site" evidence="1">
    <location>
        <begin position="83"/>
        <end position="85"/>
    </location>
    <ligand>
        <name>5-amino-6-(D-ribitylamino)uracil</name>
        <dbReference type="ChEBI" id="CHEBI:15934"/>
    </ligand>
</feature>
<feature type="binding site" evidence="1">
    <location>
        <begin position="88"/>
        <end position="89"/>
    </location>
    <ligand>
        <name>(2S)-2-hydroxy-3-oxobutyl phosphate</name>
        <dbReference type="ChEBI" id="CHEBI:58830"/>
    </ligand>
</feature>
<feature type="binding site" evidence="1">
    <location>
        <position position="114"/>
    </location>
    <ligand>
        <name>5-amino-6-(D-ribitylamino)uracil</name>
        <dbReference type="ChEBI" id="CHEBI:15934"/>
    </ligand>
</feature>
<feature type="binding site" evidence="1">
    <location>
        <position position="128"/>
    </location>
    <ligand>
        <name>(2S)-2-hydroxy-3-oxobutyl phosphate</name>
        <dbReference type="ChEBI" id="CHEBI:58830"/>
    </ligand>
</feature>
<dbReference type="EC" id="2.5.1.78" evidence="1"/>
<dbReference type="EMBL" id="CP000786">
    <property type="protein sequence ID" value="ABZ98242.1"/>
    <property type="molecule type" value="Genomic_DNA"/>
</dbReference>
<dbReference type="RefSeq" id="WP_012389112.1">
    <property type="nucleotide sequence ID" value="NC_010602.1"/>
</dbReference>
<dbReference type="SMR" id="B0ST02"/>
<dbReference type="STRING" id="456481.LEPBI_I2140"/>
<dbReference type="KEGG" id="lbi:LEPBI_I2140"/>
<dbReference type="HOGENOM" id="CLU_089358_1_1_12"/>
<dbReference type="OrthoDB" id="9809709at2"/>
<dbReference type="BioCyc" id="LBIF456481:LEPBI_RS10570-MONOMER"/>
<dbReference type="UniPathway" id="UPA00275">
    <property type="reaction ID" value="UER00404"/>
</dbReference>
<dbReference type="Proteomes" id="UP000001847">
    <property type="component" value="Chromosome I"/>
</dbReference>
<dbReference type="GO" id="GO:0005829">
    <property type="term" value="C:cytosol"/>
    <property type="evidence" value="ECO:0007669"/>
    <property type="project" value="TreeGrafter"/>
</dbReference>
<dbReference type="GO" id="GO:0009349">
    <property type="term" value="C:riboflavin synthase complex"/>
    <property type="evidence" value="ECO:0007669"/>
    <property type="project" value="InterPro"/>
</dbReference>
<dbReference type="GO" id="GO:0000906">
    <property type="term" value="F:6,7-dimethyl-8-ribityllumazine synthase activity"/>
    <property type="evidence" value="ECO:0007669"/>
    <property type="project" value="UniProtKB-UniRule"/>
</dbReference>
<dbReference type="GO" id="GO:0009231">
    <property type="term" value="P:riboflavin biosynthetic process"/>
    <property type="evidence" value="ECO:0007669"/>
    <property type="project" value="UniProtKB-UniRule"/>
</dbReference>
<dbReference type="CDD" id="cd09209">
    <property type="entry name" value="Lumazine_synthase-I"/>
    <property type="match status" value="1"/>
</dbReference>
<dbReference type="Gene3D" id="3.40.50.960">
    <property type="entry name" value="Lumazine/riboflavin synthase"/>
    <property type="match status" value="1"/>
</dbReference>
<dbReference type="HAMAP" id="MF_00178">
    <property type="entry name" value="Lumazine_synth"/>
    <property type="match status" value="1"/>
</dbReference>
<dbReference type="InterPro" id="IPR034964">
    <property type="entry name" value="LS"/>
</dbReference>
<dbReference type="InterPro" id="IPR002180">
    <property type="entry name" value="LS/RS"/>
</dbReference>
<dbReference type="InterPro" id="IPR036467">
    <property type="entry name" value="LS/RS_sf"/>
</dbReference>
<dbReference type="NCBIfam" id="TIGR00114">
    <property type="entry name" value="lumazine-synth"/>
    <property type="match status" value="1"/>
</dbReference>
<dbReference type="PANTHER" id="PTHR21058:SF0">
    <property type="entry name" value="6,7-DIMETHYL-8-RIBITYLLUMAZINE SYNTHASE"/>
    <property type="match status" value="1"/>
</dbReference>
<dbReference type="PANTHER" id="PTHR21058">
    <property type="entry name" value="6,7-DIMETHYL-8-RIBITYLLUMAZINE SYNTHASE DMRL SYNTHASE LUMAZINE SYNTHASE"/>
    <property type="match status" value="1"/>
</dbReference>
<dbReference type="Pfam" id="PF00885">
    <property type="entry name" value="DMRL_synthase"/>
    <property type="match status" value="1"/>
</dbReference>
<dbReference type="SUPFAM" id="SSF52121">
    <property type="entry name" value="Lumazine synthase"/>
    <property type="match status" value="1"/>
</dbReference>
<comment type="function">
    <text evidence="1">Catalyzes the formation of 6,7-dimethyl-8-ribityllumazine by condensation of 5-amino-6-(D-ribitylamino)uracil with 3,4-dihydroxy-2-butanone 4-phosphate. This is the penultimate step in the biosynthesis of riboflavin.</text>
</comment>
<comment type="catalytic activity">
    <reaction evidence="1">
        <text>(2S)-2-hydroxy-3-oxobutyl phosphate + 5-amino-6-(D-ribitylamino)uracil = 6,7-dimethyl-8-(1-D-ribityl)lumazine + phosphate + 2 H2O + H(+)</text>
        <dbReference type="Rhea" id="RHEA:26152"/>
        <dbReference type="ChEBI" id="CHEBI:15377"/>
        <dbReference type="ChEBI" id="CHEBI:15378"/>
        <dbReference type="ChEBI" id="CHEBI:15934"/>
        <dbReference type="ChEBI" id="CHEBI:43474"/>
        <dbReference type="ChEBI" id="CHEBI:58201"/>
        <dbReference type="ChEBI" id="CHEBI:58830"/>
        <dbReference type="EC" id="2.5.1.78"/>
    </reaction>
</comment>
<comment type="pathway">
    <text evidence="1">Cofactor biosynthesis; riboflavin biosynthesis; riboflavin from 2-hydroxy-3-oxobutyl phosphate and 5-amino-6-(D-ribitylamino)uracil: step 1/2.</text>
</comment>
<comment type="similarity">
    <text evidence="1">Belongs to the DMRL synthase family.</text>
</comment>
<name>RISB_LEPBP</name>
<protein>
    <recommendedName>
        <fullName evidence="1">6,7-dimethyl-8-ribityllumazine synthase</fullName>
        <shortName evidence="1">DMRL synthase</shortName>
        <shortName evidence="1">LS</shortName>
        <shortName evidence="1">Lumazine synthase</shortName>
        <ecNumber evidence="1">2.5.1.78</ecNumber>
    </recommendedName>
</protein>